<evidence type="ECO:0000250" key="1"/>
<evidence type="ECO:0000255" key="2"/>
<evidence type="ECO:0000305" key="3"/>
<keyword id="KW-0998">Cell outer membrane</keyword>
<keyword id="KW-0472">Membrane</keyword>
<keyword id="KW-1185">Reference proteome</keyword>
<keyword id="KW-0732">Signal</keyword>
<keyword id="KW-0812">Transmembrane</keyword>
<keyword id="KW-1134">Transmembrane beta strand</keyword>
<sequence length="243" mass="26886">MLRIVKKLWVILFISNISINSFAKNIYDNVDDANYDSTQYYENEGSLLFKMRLGGIFASAKQKGLPTHSSIQAVSVGEVAKNGYGGDASTTIFFNNYLAAELSLGFNVLRTKYTSLAAVAHNYGVDNVKLGKHKPIYMIPATLTGQFHIAPYGGIRPYIGIGYHGSYMLTQATGLKIRNGYNIVGQIGVDFYAKDDTLINMDVRQFFLKPKLEYKPNLVGNKKVTSKVKLNPLIVSIGIGFTF</sequence>
<dbReference type="EMBL" id="AJ235270">
    <property type="protein sequence ID" value="CAA14546.1"/>
    <property type="status" value="ALT_INIT"/>
    <property type="molecule type" value="Genomic_DNA"/>
</dbReference>
<dbReference type="PIR" id="C71716">
    <property type="entry name" value="C71716"/>
</dbReference>
<dbReference type="RefSeq" id="NP_220469.1">
    <property type="nucleotide sequence ID" value="NC_000963.1"/>
</dbReference>
<dbReference type="RefSeq" id="WP_014411635.1">
    <property type="nucleotide sequence ID" value="NC_000963.1"/>
</dbReference>
<dbReference type="STRING" id="272947.gene:17555158"/>
<dbReference type="EnsemblBacteria" id="CAA14546">
    <property type="protein sequence ID" value="CAA14546"/>
    <property type="gene ID" value="CAA14546"/>
</dbReference>
<dbReference type="KEGG" id="rpr:RP075"/>
<dbReference type="PATRIC" id="fig|272947.5.peg.76"/>
<dbReference type="eggNOG" id="COG3047">
    <property type="taxonomic scope" value="Bacteria"/>
</dbReference>
<dbReference type="HOGENOM" id="CLU_1141892_0_0_5"/>
<dbReference type="OrthoDB" id="9807574at2"/>
<dbReference type="Proteomes" id="UP000002480">
    <property type="component" value="Chromosome"/>
</dbReference>
<dbReference type="GO" id="GO:0009279">
    <property type="term" value="C:cell outer membrane"/>
    <property type="evidence" value="ECO:0007669"/>
    <property type="project" value="UniProtKB-SubCell"/>
</dbReference>
<dbReference type="GO" id="GO:0055085">
    <property type="term" value="P:transmembrane transport"/>
    <property type="evidence" value="ECO:0007669"/>
    <property type="project" value="TreeGrafter"/>
</dbReference>
<dbReference type="Gene3D" id="2.40.160.20">
    <property type="match status" value="1"/>
</dbReference>
<dbReference type="InterPro" id="IPR011250">
    <property type="entry name" value="OMP/PagP_b-brl"/>
</dbReference>
<dbReference type="InterPro" id="IPR005618">
    <property type="entry name" value="OMPW"/>
</dbReference>
<dbReference type="PANTHER" id="PTHR36920">
    <property type="match status" value="1"/>
</dbReference>
<dbReference type="PANTHER" id="PTHR36920:SF1">
    <property type="entry name" value="OUTER MEMBRANE PROTEIN W"/>
    <property type="match status" value="1"/>
</dbReference>
<dbReference type="Pfam" id="PF03922">
    <property type="entry name" value="OmpW"/>
    <property type="match status" value="1"/>
</dbReference>
<dbReference type="SUPFAM" id="SSF56925">
    <property type="entry name" value="OMPA-like"/>
    <property type="match status" value="1"/>
</dbReference>
<name>Y075_RICPR</name>
<organism>
    <name type="scientific">Rickettsia prowazekii (strain Madrid E)</name>
    <dbReference type="NCBI Taxonomy" id="272947"/>
    <lineage>
        <taxon>Bacteria</taxon>
        <taxon>Pseudomonadati</taxon>
        <taxon>Pseudomonadota</taxon>
        <taxon>Alphaproteobacteria</taxon>
        <taxon>Rickettsiales</taxon>
        <taxon>Rickettsiaceae</taxon>
        <taxon>Rickettsieae</taxon>
        <taxon>Rickettsia</taxon>
        <taxon>typhus group</taxon>
    </lineage>
</organism>
<proteinExistence type="inferred from homology"/>
<accession>Q9ZE71</accession>
<comment type="subcellular location">
    <subcellularLocation>
        <location evidence="1">Cell outer membrane</location>
    </subcellularLocation>
</comment>
<comment type="similarity">
    <text evidence="3">Belongs to the OmpW/AlkL family.</text>
</comment>
<comment type="sequence caution" evidence="3">
    <conflict type="erroneous initiation">
        <sequence resource="EMBL-CDS" id="CAA14546"/>
    </conflict>
</comment>
<gene>
    <name type="ordered locus">RP075</name>
</gene>
<feature type="signal peptide" evidence="2">
    <location>
        <begin position="1"/>
        <end position="23"/>
    </location>
</feature>
<feature type="chain" id="PRO_0000262723" description="Putative outer membrane protein RP075">
    <location>
        <begin position="24"/>
        <end position="243"/>
    </location>
</feature>
<reference key="1">
    <citation type="journal article" date="1998" name="Nature">
        <title>The genome sequence of Rickettsia prowazekii and the origin of mitochondria.</title>
        <authorList>
            <person name="Andersson S.G.E."/>
            <person name="Zomorodipour A."/>
            <person name="Andersson J.O."/>
            <person name="Sicheritz-Ponten T."/>
            <person name="Alsmark U.C.M."/>
            <person name="Podowski R.M."/>
            <person name="Naeslund A.K."/>
            <person name="Eriksson A.-S."/>
            <person name="Winkler H.H."/>
            <person name="Kurland C.G."/>
        </authorList>
    </citation>
    <scope>NUCLEOTIDE SEQUENCE [LARGE SCALE GENOMIC DNA]</scope>
    <source>
        <strain>Madrid E</strain>
    </source>
</reference>
<protein>
    <recommendedName>
        <fullName>Putative outer membrane protein RP075</fullName>
    </recommendedName>
</protein>